<reference key="1">
    <citation type="journal article" date="2002" name="Nucleic Acids Res.">
        <title>Genome sequence of Shigella flexneri 2a: insights into pathogenicity through comparison with genomes of Escherichia coli K12 and O157.</title>
        <authorList>
            <person name="Jin Q."/>
            <person name="Yuan Z."/>
            <person name="Xu J."/>
            <person name="Wang Y."/>
            <person name="Shen Y."/>
            <person name="Lu W."/>
            <person name="Wang J."/>
            <person name="Liu H."/>
            <person name="Yang J."/>
            <person name="Yang F."/>
            <person name="Zhang X."/>
            <person name="Zhang J."/>
            <person name="Yang G."/>
            <person name="Wu H."/>
            <person name="Qu D."/>
            <person name="Dong J."/>
            <person name="Sun L."/>
            <person name="Xue Y."/>
            <person name="Zhao A."/>
            <person name="Gao Y."/>
            <person name="Zhu J."/>
            <person name="Kan B."/>
            <person name="Ding K."/>
            <person name="Chen S."/>
            <person name="Cheng H."/>
            <person name="Yao Z."/>
            <person name="He B."/>
            <person name="Chen R."/>
            <person name="Ma D."/>
            <person name="Qiang B."/>
            <person name="Wen Y."/>
            <person name="Hou Y."/>
            <person name="Yu J."/>
        </authorList>
    </citation>
    <scope>NUCLEOTIDE SEQUENCE [LARGE SCALE GENOMIC DNA]</scope>
    <source>
        <strain>301 / Serotype 2a</strain>
    </source>
</reference>
<reference key="2">
    <citation type="journal article" date="2003" name="Infect. Immun.">
        <title>Complete genome sequence and comparative genomics of Shigella flexneri serotype 2a strain 2457T.</title>
        <authorList>
            <person name="Wei J."/>
            <person name="Goldberg M.B."/>
            <person name="Burland V."/>
            <person name="Venkatesan M.M."/>
            <person name="Deng W."/>
            <person name="Fournier G."/>
            <person name="Mayhew G.F."/>
            <person name="Plunkett G. III"/>
            <person name="Rose D.J."/>
            <person name="Darling A."/>
            <person name="Mau B."/>
            <person name="Perna N.T."/>
            <person name="Payne S.M."/>
            <person name="Runyen-Janecky L.J."/>
            <person name="Zhou S."/>
            <person name="Schwartz D.C."/>
            <person name="Blattner F.R."/>
        </authorList>
    </citation>
    <scope>NUCLEOTIDE SEQUENCE [LARGE SCALE GENOMIC DNA]</scope>
    <source>
        <strain>ATCC 700930 / 2457T / Serotype 2a</strain>
    </source>
</reference>
<keyword id="KW-1185">Reference proteome</keyword>
<keyword id="KW-0687">Ribonucleoprotein</keyword>
<keyword id="KW-0689">Ribosomal protein</keyword>
<name>RS9_SHIFL</name>
<dbReference type="EMBL" id="AE005674">
    <property type="protein sequence ID" value="AAN44734.1"/>
    <property type="molecule type" value="Genomic_DNA"/>
</dbReference>
<dbReference type="EMBL" id="AE014073">
    <property type="protein sequence ID" value="AAP18545.1"/>
    <property type="molecule type" value="Genomic_DNA"/>
</dbReference>
<dbReference type="RefSeq" id="NP_709027.1">
    <property type="nucleotide sequence ID" value="NC_004337.2"/>
</dbReference>
<dbReference type="RefSeq" id="WP_000829819.1">
    <property type="nucleotide sequence ID" value="NZ_CP123365.1"/>
</dbReference>
<dbReference type="SMR" id="Q83Q07"/>
<dbReference type="STRING" id="198214.SF3270"/>
<dbReference type="PaxDb" id="198214-SF3270"/>
<dbReference type="GeneID" id="1027073"/>
<dbReference type="KEGG" id="sfl:SF3270"/>
<dbReference type="KEGG" id="sfx:S3485"/>
<dbReference type="PATRIC" id="fig|198214.7.peg.3875"/>
<dbReference type="HOGENOM" id="CLU_046483_2_1_6"/>
<dbReference type="Proteomes" id="UP000001006">
    <property type="component" value="Chromosome"/>
</dbReference>
<dbReference type="Proteomes" id="UP000002673">
    <property type="component" value="Chromosome"/>
</dbReference>
<dbReference type="GO" id="GO:0022627">
    <property type="term" value="C:cytosolic small ribosomal subunit"/>
    <property type="evidence" value="ECO:0007669"/>
    <property type="project" value="TreeGrafter"/>
</dbReference>
<dbReference type="GO" id="GO:0003723">
    <property type="term" value="F:RNA binding"/>
    <property type="evidence" value="ECO:0007669"/>
    <property type="project" value="TreeGrafter"/>
</dbReference>
<dbReference type="GO" id="GO:0003735">
    <property type="term" value="F:structural constituent of ribosome"/>
    <property type="evidence" value="ECO:0007669"/>
    <property type="project" value="InterPro"/>
</dbReference>
<dbReference type="GO" id="GO:0006412">
    <property type="term" value="P:translation"/>
    <property type="evidence" value="ECO:0007669"/>
    <property type="project" value="UniProtKB-UniRule"/>
</dbReference>
<dbReference type="FunFam" id="3.30.230.10:FF:000001">
    <property type="entry name" value="30S ribosomal protein S9"/>
    <property type="match status" value="1"/>
</dbReference>
<dbReference type="Gene3D" id="3.30.230.10">
    <property type="match status" value="1"/>
</dbReference>
<dbReference type="HAMAP" id="MF_00532_B">
    <property type="entry name" value="Ribosomal_uS9_B"/>
    <property type="match status" value="1"/>
</dbReference>
<dbReference type="InterPro" id="IPR020568">
    <property type="entry name" value="Ribosomal_Su5_D2-typ_SF"/>
</dbReference>
<dbReference type="InterPro" id="IPR000754">
    <property type="entry name" value="Ribosomal_uS9"/>
</dbReference>
<dbReference type="InterPro" id="IPR023035">
    <property type="entry name" value="Ribosomal_uS9_bac/plastid"/>
</dbReference>
<dbReference type="InterPro" id="IPR020574">
    <property type="entry name" value="Ribosomal_uS9_CS"/>
</dbReference>
<dbReference type="InterPro" id="IPR014721">
    <property type="entry name" value="Ribsml_uS5_D2-typ_fold_subgr"/>
</dbReference>
<dbReference type="NCBIfam" id="NF001099">
    <property type="entry name" value="PRK00132.1"/>
    <property type="match status" value="1"/>
</dbReference>
<dbReference type="PANTHER" id="PTHR21569">
    <property type="entry name" value="RIBOSOMAL PROTEIN S9"/>
    <property type="match status" value="1"/>
</dbReference>
<dbReference type="PANTHER" id="PTHR21569:SF1">
    <property type="entry name" value="SMALL RIBOSOMAL SUBUNIT PROTEIN US9M"/>
    <property type="match status" value="1"/>
</dbReference>
<dbReference type="Pfam" id="PF00380">
    <property type="entry name" value="Ribosomal_S9"/>
    <property type="match status" value="1"/>
</dbReference>
<dbReference type="SUPFAM" id="SSF54211">
    <property type="entry name" value="Ribosomal protein S5 domain 2-like"/>
    <property type="match status" value="1"/>
</dbReference>
<dbReference type="PROSITE" id="PS00360">
    <property type="entry name" value="RIBOSOMAL_S9"/>
    <property type="match status" value="1"/>
</dbReference>
<organism>
    <name type="scientific">Shigella flexneri</name>
    <dbReference type="NCBI Taxonomy" id="623"/>
    <lineage>
        <taxon>Bacteria</taxon>
        <taxon>Pseudomonadati</taxon>
        <taxon>Pseudomonadota</taxon>
        <taxon>Gammaproteobacteria</taxon>
        <taxon>Enterobacterales</taxon>
        <taxon>Enterobacteriaceae</taxon>
        <taxon>Shigella</taxon>
    </lineage>
</organism>
<sequence length="130" mass="14874">MAENQYYGTGRRKSSAARVFIKPGNGKIVINQRSLEQYFGRETARMVVRQPMELVDMVEKLDLYITVKGGGISGQAGAIRHGITRALMEYDESLRSELRKAGFVTRDARQVERKKVGLRKARRRPQFSKR</sequence>
<proteinExistence type="inferred from homology"/>
<comment type="similarity">
    <text evidence="2">Belongs to the universal ribosomal protein uS9 family.</text>
</comment>
<accession>Q83Q07</accession>
<protein>
    <recommendedName>
        <fullName evidence="2">Small ribosomal subunit protein uS9</fullName>
    </recommendedName>
    <alternativeName>
        <fullName>30S ribosomal protein S9</fullName>
    </alternativeName>
</protein>
<gene>
    <name type="primary">rpsI</name>
    <name type="ordered locus">SF3270</name>
    <name type="ordered locus">S3485</name>
</gene>
<evidence type="ECO:0000250" key="1"/>
<evidence type="ECO:0000305" key="2"/>
<feature type="initiator methionine" description="Removed" evidence="1">
    <location>
        <position position="1"/>
    </location>
</feature>
<feature type="chain" id="PRO_0000111403" description="Small ribosomal subunit protein uS9">
    <location>
        <begin position="2"/>
        <end position="130"/>
    </location>
</feature>
<feature type="sequence conflict" description="In Ref. 2; AAP18545." evidence="2" ref="2">
    <original>M</original>
    <variation>L</variation>
    <location>
        <position position="52"/>
    </location>
</feature>